<protein>
    <recommendedName>
        <fullName evidence="2">Anaerobic nitrite reductase GLB0</fullName>
        <ecNumber evidence="2">1.7.2.-</ecNumber>
    </recommendedName>
    <alternativeName>
        <fullName evidence="7 8">Non-symbiotic hemoglobin 0</fullName>
    </alternativeName>
    <alternativeName>
        <fullName evidence="6">Non-vascular plant hemoglobin Glb0</fullName>
    </alternativeName>
</protein>
<reference key="1">
    <citation type="online journal article" date="2000" name="Plant Gene Register">
        <title>Sequence analysis of an ancient hemoglobin cDNA isolated from the moss Physcomitrella patens.</title>
        <authorList>
            <person name="Arredondo-Peter R."/>
            <person name="Ramirez M."/>
            <person name="Sarath G."/>
            <person name="Klucas R.V."/>
        </authorList>
        <locator>PGR00-040</locator>
    </citation>
    <scope>NUCLEOTIDE SEQUENCE [MRNA]</scope>
</reference>
<reference key="2">
    <citation type="journal article" date="2001" name="Plant Mol. Biol.">
        <title>Expression and evolution of functionally distinct haemoglobin genes in plants.</title>
        <authorList>
            <person name="Hunt P.W."/>
            <person name="Watts R.A."/>
            <person name="Trevaskis B."/>
            <person name="Llewellyn D.J."/>
            <person name="Burnell J."/>
            <person name="Dennis E.S."/>
            <person name="Peacock W.J."/>
        </authorList>
    </citation>
    <scope>NUCLEOTIDE SEQUENCE [MRNA]</scope>
</reference>
<reference key="3">
    <citation type="submission" date="2006-09" db="EMBL/GenBank/DDBJ databases">
        <title>Cloning of Physcomitrella patens non-symbiotic hemoglobin gene.</title>
        <authorList>
            <person name="Garrocho-Villegas V."/>
            <person name="Arredondo-Peter R."/>
        </authorList>
    </citation>
    <scope>NUCLEOTIDE SEQUENCE [GENOMIC DNA]</scope>
    <source>
        <tissue>Gametophyte</tissue>
    </source>
</reference>
<reference key="4">
    <citation type="journal article" date="2008" name="Science">
        <title>The Physcomitrella genome reveals evolutionary insights into the conquest of land by plants.</title>
        <authorList>
            <person name="Rensing S.A."/>
            <person name="Lang D."/>
            <person name="Zimmer A.D."/>
            <person name="Terry A."/>
            <person name="Salamov A."/>
            <person name="Shapiro H."/>
            <person name="Nishiyama T."/>
            <person name="Perroud P.-F."/>
            <person name="Lindquist E.A."/>
            <person name="Kamisugi Y."/>
            <person name="Tanahashi T."/>
            <person name="Sakakibara K."/>
            <person name="Fujita T."/>
            <person name="Oishi K."/>
            <person name="Shin-I T."/>
            <person name="Kuroki Y."/>
            <person name="Toyoda A."/>
            <person name="Suzuki Y."/>
            <person name="Hashimoto S.-I."/>
            <person name="Yamaguchi K."/>
            <person name="Sugano S."/>
            <person name="Kohara Y."/>
            <person name="Fujiyama A."/>
            <person name="Anterola A."/>
            <person name="Aoki S."/>
            <person name="Ashton N."/>
            <person name="Barbazuk W.B."/>
            <person name="Barker E."/>
            <person name="Bennetzen J.L."/>
            <person name="Blankenship R."/>
            <person name="Cho S.H."/>
            <person name="Dutcher S.K."/>
            <person name="Estelle M."/>
            <person name="Fawcett J.A."/>
            <person name="Gundlach H."/>
            <person name="Hanada K."/>
            <person name="Heyl A."/>
            <person name="Hicks K.A."/>
            <person name="Hughes J."/>
            <person name="Lohr M."/>
            <person name="Mayer K."/>
            <person name="Melkozernov A."/>
            <person name="Murata T."/>
            <person name="Nelson D.R."/>
            <person name="Pils B."/>
            <person name="Prigge M."/>
            <person name="Reiss B."/>
            <person name="Renner T."/>
            <person name="Rombauts S."/>
            <person name="Rushton P.J."/>
            <person name="Sanderfoot A."/>
            <person name="Schween G."/>
            <person name="Shiu S.-H."/>
            <person name="Stueber K."/>
            <person name="Theodoulou F.L."/>
            <person name="Tu H."/>
            <person name="Van de Peer Y."/>
            <person name="Verrier P.J."/>
            <person name="Waters E."/>
            <person name="Wood A."/>
            <person name="Yang L."/>
            <person name="Cove D."/>
            <person name="Cuming A.C."/>
            <person name="Hasebe M."/>
            <person name="Lucas S."/>
            <person name="Mishler B.D."/>
            <person name="Reski R."/>
            <person name="Grigoriev I.V."/>
            <person name="Quatrano R.S."/>
            <person name="Boore J.L."/>
        </authorList>
    </citation>
    <scope>NUCLEOTIDE SEQUENCE [LARGE SCALE GENOMIC DNA]</scope>
    <source>
        <strain>cv. Gransden 2004</strain>
    </source>
</reference>
<keyword id="KW-0963">Cytoplasm</keyword>
<keyword id="KW-0349">Heme</keyword>
<keyword id="KW-0408">Iron</keyword>
<keyword id="KW-0479">Metal-binding</keyword>
<keyword id="KW-0539">Nucleus</keyword>
<keyword id="KW-0560">Oxidoreductase</keyword>
<keyword id="KW-0561">Oxygen transport</keyword>
<keyword id="KW-1185">Reference proteome</keyword>
<keyword id="KW-0813">Transport</keyword>
<proteinExistence type="evidence at transcript level"/>
<dbReference type="EC" id="1.7.2.-" evidence="2"/>
<dbReference type="EMBL" id="AF218049">
    <property type="protein sequence ID" value="AAF66104.1"/>
    <property type="molecule type" value="mRNA"/>
</dbReference>
<dbReference type="EMBL" id="AY026342">
    <property type="protein sequence ID" value="AAK14807.1"/>
    <property type="molecule type" value="mRNA"/>
</dbReference>
<dbReference type="EMBL" id="EF028055">
    <property type="protein sequence ID" value="ABK20873.1"/>
    <property type="molecule type" value="Genomic_DNA"/>
</dbReference>
<dbReference type="EMBL" id="DS544960">
    <property type="protein sequence ID" value="EDQ70344.1"/>
    <property type="molecule type" value="Genomic_DNA"/>
</dbReference>
<dbReference type="RefSeq" id="XP_001764902.1">
    <property type="nucleotide sequence ID" value="XM_001764850.1"/>
</dbReference>
<dbReference type="SMR" id="Q9M630"/>
<dbReference type="FunCoup" id="Q9M630">
    <property type="interactions" value="310"/>
</dbReference>
<dbReference type="PaxDb" id="3218-PP1S71_207V6.1"/>
<dbReference type="EnsemblPlants" id="Pp3c22_15040V3.1">
    <property type="protein sequence ID" value="Pp3c22_15040V3.1"/>
    <property type="gene ID" value="Pp3c22_15040"/>
</dbReference>
<dbReference type="EnsemblPlants" id="Pp3c22_15040V3.2">
    <property type="protein sequence ID" value="Pp3c22_15040V3.2"/>
    <property type="gene ID" value="Pp3c22_15040"/>
</dbReference>
<dbReference type="EnsemblPlants" id="Pp3c22_15040V3.3">
    <property type="protein sequence ID" value="Pp3c22_15040V3.3"/>
    <property type="gene ID" value="Pp3c22_15040"/>
</dbReference>
<dbReference type="EnsemblPlants" id="Pp3c22_15040V3.5">
    <property type="protein sequence ID" value="Pp3c22_15040V3.5"/>
    <property type="gene ID" value="Pp3c22_15040"/>
</dbReference>
<dbReference type="Gramene" id="Pp3c22_15040V3.1">
    <property type="protein sequence ID" value="Pp3c22_15040V3.1"/>
    <property type="gene ID" value="Pp3c22_15040"/>
</dbReference>
<dbReference type="Gramene" id="Pp3c22_15040V3.2">
    <property type="protein sequence ID" value="Pp3c22_15040V3.2"/>
    <property type="gene ID" value="Pp3c22_15040"/>
</dbReference>
<dbReference type="Gramene" id="Pp3c22_15040V3.3">
    <property type="protein sequence ID" value="Pp3c22_15040V3.3"/>
    <property type="gene ID" value="Pp3c22_15040"/>
</dbReference>
<dbReference type="Gramene" id="Pp3c22_15040V3.5">
    <property type="protein sequence ID" value="Pp3c22_15040V3.5"/>
    <property type="gene ID" value="Pp3c22_15040"/>
</dbReference>
<dbReference type="eggNOG" id="KOG3378">
    <property type="taxonomic scope" value="Eukaryota"/>
</dbReference>
<dbReference type="HOGENOM" id="CLU_003827_11_2_1"/>
<dbReference type="InParanoid" id="Q9M630"/>
<dbReference type="OMA" id="MGEEFIH"/>
<dbReference type="OrthoDB" id="436496at2759"/>
<dbReference type="Proteomes" id="UP000006727">
    <property type="component" value="Chromosome 22"/>
</dbReference>
<dbReference type="GO" id="GO:0005737">
    <property type="term" value="C:cytoplasm"/>
    <property type="evidence" value="ECO:0007669"/>
    <property type="project" value="UniProtKB-SubCell"/>
</dbReference>
<dbReference type="GO" id="GO:0005634">
    <property type="term" value="C:nucleus"/>
    <property type="evidence" value="ECO:0007669"/>
    <property type="project" value="UniProtKB-SubCell"/>
</dbReference>
<dbReference type="GO" id="GO:0020037">
    <property type="term" value="F:heme binding"/>
    <property type="evidence" value="ECO:0007669"/>
    <property type="project" value="InterPro"/>
</dbReference>
<dbReference type="GO" id="GO:0046872">
    <property type="term" value="F:metal ion binding"/>
    <property type="evidence" value="ECO:0007669"/>
    <property type="project" value="UniProtKB-KW"/>
</dbReference>
<dbReference type="GO" id="GO:0016491">
    <property type="term" value="F:oxidoreductase activity"/>
    <property type="evidence" value="ECO:0007669"/>
    <property type="project" value="UniProtKB-KW"/>
</dbReference>
<dbReference type="GO" id="GO:0019825">
    <property type="term" value="F:oxygen binding"/>
    <property type="evidence" value="ECO:0007669"/>
    <property type="project" value="InterPro"/>
</dbReference>
<dbReference type="GO" id="GO:0005344">
    <property type="term" value="F:oxygen carrier activity"/>
    <property type="evidence" value="ECO:0007669"/>
    <property type="project" value="UniProtKB-KW"/>
</dbReference>
<dbReference type="CDD" id="cd14784">
    <property type="entry name" value="class1_nsHb-like"/>
    <property type="match status" value="1"/>
</dbReference>
<dbReference type="Gene3D" id="1.10.490.10">
    <property type="entry name" value="Globins"/>
    <property type="match status" value="1"/>
</dbReference>
<dbReference type="InterPro" id="IPR000971">
    <property type="entry name" value="Globin"/>
</dbReference>
<dbReference type="InterPro" id="IPR009050">
    <property type="entry name" value="Globin-like_sf"/>
</dbReference>
<dbReference type="InterPro" id="IPR012292">
    <property type="entry name" value="Globin/Proto"/>
</dbReference>
<dbReference type="InterPro" id="IPR001032">
    <property type="entry name" value="Leghaemoglobin-like"/>
</dbReference>
<dbReference type="InterPro" id="IPR019824">
    <property type="entry name" value="Leghaemoglobin_Fe_BS"/>
</dbReference>
<dbReference type="PANTHER" id="PTHR22924">
    <property type="entry name" value="LEGHEMOGLOBIN-RELATED"/>
    <property type="match status" value="1"/>
</dbReference>
<dbReference type="PANTHER" id="PTHR22924:SF98">
    <property type="entry name" value="NON-SYMBIOTIC HEMOGLOBIN 3"/>
    <property type="match status" value="1"/>
</dbReference>
<dbReference type="Pfam" id="PF00042">
    <property type="entry name" value="Globin"/>
    <property type="match status" value="1"/>
</dbReference>
<dbReference type="PRINTS" id="PR00188">
    <property type="entry name" value="PLANTGLOBIN"/>
</dbReference>
<dbReference type="SUPFAM" id="SSF46458">
    <property type="entry name" value="Globin-like"/>
    <property type="match status" value="1"/>
</dbReference>
<dbReference type="PROSITE" id="PS01033">
    <property type="entry name" value="GLOBIN"/>
    <property type="match status" value="1"/>
</dbReference>
<dbReference type="PROSITE" id="PS00208">
    <property type="entry name" value="PLANT_GLOBIN"/>
    <property type="match status" value="1"/>
</dbReference>
<sequence>MASAVVNQSEAAAVRAPSKPVKTYSKENEQLVKQSWEILKKDAQRNGINFFRKVFEIAPGAKAMYSFLRDSTIPFEENPKVKNHARYVFMMTGDAAVQLGEKGAYQVLESKLQKLAATHVNAGVTDDQFEIVKEAILYAIEMGVPDLWSPELKSAWGDAYDMLAEQVKAEMHAQRSAATS</sequence>
<name>HBL0_PHYPA</name>
<organism>
    <name type="scientific">Physcomitrium patens</name>
    <name type="common">Spreading-leaved earth moss</name>
    <name type="synonym">Physcomitrella patens</name>
    <dbReference type="NCBI Taxonomy" id="3218"/>
    <lineage>
        <taxon>Eukaryota</taxon>
        <taxon>Viridiplantae</taxon>
        <taxon>Streptophyta</taxon>
        <taxon>Embryophyta</taxon>
        <taxon>Bryophyta</taxon>
        <taxon>Bryophytina</taxon>
        <taxon>Bryopsida</taxon>
        <taxon>Funariidae</taxon>
        <taxon>Funariales</taxon>
        <taxon>Funariaceae</taxon>
        <taxon>Physcomitrium</taxon>
    </lineage>
</organism>
<evidence type="ECO:0000250" key="1">
    <source>
        <dbReference type="UniProtKB" id="A2XE98"/>
    </source>
</evidence>
<evidence type="ECO:0000250" key="2">
    <source>
        <dbReference type="UniProtKB" id="O04986"/>
    </source>
</evidence>
<evidence type="ECO:0000250" key="3">
    <source>
        <dbReference type="UniProtKB" id="P68168"/>
    </source>
</evidence>
<evidence type="ECO:0000250" key="4">
    <source>
        <dbReference type="UniProtKB" id="Q42831"/>
    </source>
</evidence>
<evidence type="ECO:0000255" key="5">
    <source>
        <dbReference type="PROSITE-ProRule" id="PRU00238"/>
    </source>
</evidence>
<evidence type="ECO:0000303" key="6">
    <source>
    </source>
</evidence>
<evidence type="ECO:0000303" key="7">
    <source ref="1"/>
</evidence>
<evidence type="ECO:0000303" key="8">
    <source ref="3"/>
</evidence>
<evidence type="ECO:0000305" key="9"/>
<comment type="function">
    <text evidence="2 4">Phytoglobin that reduces nitrite to nitric oxide (NO) under anoxic conditions (e.g. during flooding or in waterlogged soil) (By similarity). May not function as an oxygen storage or transport protein (By similarity). Has an unusually high affinity for O(2) through an hexacoordinate heme iron because of a very low dissociation constant (By similarity).</text>
</comment>
<comment type="catalytic activity">
    <reaction evidence="2">
        <text>Fe(III)-heme b-[protein] + nitric oxide + H2O = Fe(II)-heme b-[protein] + nitrite + 2 H(+)</text>
        <dbReference type="Rhea" id="RHEA:77711"/>
        <dbReference type="Rhea" id="RHEA-COMP:18975"/>
        <dbReference type="Rhea" id="RHEA-COMP:18976"/>
        <dbReference type="ChEBI" id="CHEBI:15377"/>
        <dbReference type="ChEBI" id="CHEBI:15378"/>
        <dbReference type="ChEBI" id="CHEBI:16301"/>
        <dbReference type="ChEBI" id="CHEBI:16480"/>
        <dbReference type="ChEBI" id="CHEBI:55376"/>
        <dbReference type="ChEBI" id="CHEBI:60344"/>
    </reaction>
    <physiologicalReaction direction="right-to-left" evidence="2">
        <dbReference type="Rhea" id="RHEA:77713"/>
    </physiologicalReaction>
</comment>
<comment type="cofactor">
    <cofactor evidence="3">
        <name>heme b</name>
        <dbReference type="ChEBI" id="CHEBI:60344"/>
    </cofactor>
    <text evidence="3">Binds 1 heme group per subunit.</text>
</comment>
<comment type="subunit">
    <text evidence="2">Homodimer.</text>
</comment>
<comment type="subcellular location">
    <subcellularLocation>
        <location evidence="1">Cytoplasm</location>
    </subcellularLocation>
    <subcellularLocation>
        <location evidence="1">Nucleus</location>
    </subcellularLocation>
</comment>
<comment type="similarity">
    <text evidence="9">Belongs to the plant globin family.</text>
</comment>
<gene>
    <name evidence="6" type="primary">GLB0</name>
    <name type="ORF">PHYPADRAFT_184189</name>
</gene>
<accession>Q9M630</accession>
<accession>A0FKM9</accession>
<accession>A9SEU7</accession>
<accession>E1C9X3</accession>
<feature type="chain" id="PRO_0000193025" description="Anaerobic nitrite reductase GLB0">
    <location>
        <begin position="1"/>
        <end position="180"/>
    </location>
</feature>
<feature type="domain" description="Globin" evidence="5">
    <location>
        <begin position="23"/>
        <end position="172"/>
    </location>
</feature>
<feature type="short sequence motif" description="Homodimerization" evidence="2">
    <location>
        <begin position="56"/>
        <end position="60"/>
    </location>
</feature>
<feature type="short sequence motif" description="Homodimerization" evidence="2">
    <location>
        <begin position="126"/>
        <end position="138"/>
    </location>
</feature>
<feature type="binding site" evidence="3">
    <location>
        <position position="66"/>
    </location>
    <ligand>
        <name>heme b</name>
        <dbReference type="ChEBI" id="CHEBI:60344"/>
    </ligand>
</feature>
<feature type="binding site" evidence="2">
    <location>
        <position position="80"/>
    </location>
    <ligand>
        <name>heme b</name>
        <dbReference type="ChEBI" id="CHEBI:60344"/>
    </ligand>
</feature>
<feature type="binding site" description="distal binding residue" evidence="5">
    <location>
        <position position="84"/>
    </location>
    <ligand>
        <name>heme b</name>
        <dbReference type="ChEBI" id="CHEBI:60344"/>
    </ligand>
    <ligandPart>
        <name>Fe</name>
        <dbReference type="ChEBI" id="CHEBI:18248"/>
    </ligandPart>
</feature>
<feature type="binding site" evidence="2">
    <location>
        <position position="114"/>
    </location>
    <ligand>
        <name>heme b</name>
        <dbReference type="ChEBI" id="CHEBI:60344"/>
    </ligand>
</feature>
<feature type="binding site" evidence="2">
    <location>
        <position position="118"/>
    </location>
    <ligand>
        <name>heme b</name>
        <dbReference type="ChEBI" id="CHEBI:60344"/>
    </ligand>
</feature>
<feature type="binding site" description="proximal binding residue" evidence="5">
    <location>
        <position position="119"/>
    </location>
    <ligand>
        <name>heme b</name>
        <dbReference type="ChEBI" id="CHEBI:60344"/>
    </ligand>
    <ligandPart>
        <name>Fe</name>
        <dbReference type="ChEBI" id="CHEBI:18248"/>
    </ligandPart>
</feature>
<feature type="site" description="Homodimerization" evidence="2">
    <location>
        <position position="153"/>
    </location>
</feature>